<dbReference type="EMBL" id="AE000513">
    <property type="protein sequence ID" value="AAF11554.1"/>
    <property type="molecule type" value="Genomic_DNA"/>
</dbReference>
<dbReference type="PIR" id="B75326">
    <property type="entry name" value="B75326"/>
</dbReference>
<dbReference type="RefSeq" id="NP_295728.1">
    <property type="nucleotide sequence ID" value="NC_001263.1"/>
</dbReference>
<dbReference type="RefSeq" id="WP_010888638.1">
    <property type="nucleotide sequence ID" value="NZ_JMLF01000018.1"/>
</dbReference>
<dbReference type="PDB" id="1NKW">
    <property type="method" value="X-ray"/>
    <property type="resolution" value="3.10 A"/>
    <property type="chains" value="3=1-64"/>
</dbReference>
<dbReference type="PDB" id="1NWX">
    <property type="method" value="X-ray"/>
    <property type="resolution" value="3.50 A"/>
    <property type="chains" value="3=2-66"/>
</dbReference>
<dbReference type="PDB" id="1NWY">
    <property type="method" value="X-ray"/>
    <property type="resolution" value="3.30 A"/>
    <property type="chains" value="3=2-66"/>
</dbReference>
<dbReference type="PDB" id="1SM1">
    <property type="method" value="X-ray"/>
    <property type="resolution" value="3.42 A"/>
    <property type="chains" value="3=1-66"/>
</dbReference>
<dbReference type="PDB" id="1XBP">
    <property type="method" value="X-ray"/>
    <property type="resolution" value="3.50 A"/>
    <property type="chains" value="3=2-66"/>
</dbReference>
<dbReference type="PDB" id="2ZJP">
    <property type="method" value="X-ray"/>
    <property type="resolution" value="3.70 A"/>
    <property type="chains" value="3=1-66"/>
</dbReference>
<dbReference type="PDB" id="2ZJQ">
    <property type="method" value="X-ray"/>
    <property type="resolution" value="3.30 A"/>
    <property type="chains" value="3=1-66"/>
</dbReference>
<dbReference type="PDB" id="2ZJR">
    <property type="method" value="X-ray"/>
    <property type="resolution" value="2.91 A"/>
    <property type="chains" value="3=1-66"/>
</dbReference>
<dbReference type="PDB" id="3CF5">
    <property type="method" value="X-ray"/>
    <property type="resolution" value="3.30 A"/>
    <property type="chains" value="3=1-66"/>
</dbReference>
<dbReference type="PDB" id="3DLL">
    <property type="method" value="X-ray"/>
    <property type="resolution" value="3.50 A"/>
    <property type="chains" value="3=1-66"/>
</dbReference>
<dbReference type="PDB" id="3PIO">
    <property type="method" value="X-ray"/>
    <property type="resolution" value="3.25 A"/>
    <property type="chains" value="3=1-66"/>
</dbReference>
<dbReference type="PDB" id="3PIP">
    <property type="method" value="X-ray"/>
    <property type="resolution" value="3.45 A"/>
    <property type="chains" value="3=1-66"/>
</dbReference>
<dbReference type="PDB" id="4IO9">
    <property type="method" value="X-ray"/>
    <property type="resolution" value="3.20 A"/>
    <property type="chains" value="3=1-66"/>
</dbReference>
<dbReference type="PDB" id="4IOA">
    <property type="method" value="X-ray"/>
    <property type="resolution" value="3.20 A"/>
    <property type="chains" value="3=1-66"/>
</dbReference>
<dbReference type="PDB" id="4IOC">
    <property type="method" value="X-ray"/>
    <property type="resolution" value="3.60 A"/>
    <property type="chains" value="3=1-66"/>
</dbReference>
<dbReference type="PDB" id="4U67">
    <property type="method" value="X-ray"/>
    <property type="resolution" value="3.65 A"/>
    <property type="chains" value="3=1-66"/>
</dbReference>
<dbReference type="PDB" id="4V49">
    <property type="method" value="X-ray"/>
    <property type="resolution" value="8.70 A"/>
    <property type="chains" value="3=2-64"/>
</dbReference>
<dbReference type="PDB" id="4V4A">
    <property type="method" value="X-ray"/>
    <property type="resolution" value="9.50 A"/>
    <property type="chains" value="3=2-64"/>
</dbReference>
<dbReference type="PDB" id="4V4G">
    <property type="method" value="X-ray"/>
    <property type="resolution" value="11.50 A"/>
    <property type="chains" value="5=2-64"/>
</dbReference>
<dbReference type="PDB" id="4V4R">
    <property type="method" value="X-ray"/>
    <property type="resolution" value="5.90 A"/>
    <property type="chains" value="B8=1-64"/>
</dbReference>
<dbReference type="PDB" id="4V4S">
    <property type="method" value="X-ray"/>
    <property type="resolution" value="6.76 A"/>
    <property type="chains" value="B8=1-64"/>
</dbReference>
<dbReference type="PDB" id="4V4T">
    <property type="method" value="X-ray"/>
    <property type="resolution" value="6.46 A"/>
    <property type="chains" value="8=1-64"/>
</dbReference>
<dbReference type="PDB" id="4WFN">
    <property type="method" value="X-ray"/>
    <property type="resolution" value="3.54 A"/>
    <property type="chains" value="3=1-65"/>
</dbReference>
<dbReference type="PDB" id="5DM6">
    <property type="method" value="X-ray"/>
    <property type="resolution" value="2.90 A"/>
    <property type="chains" value="3=2-66"/>
</dbReference>
<dbReference type="PDB" id="5DM7">
    <property type="method" value="X-ray"/>
    <property type="resolution" value="3.00 A"/>
    <property type="chains" value="3=2-66"/>
</dbReference>
<dbReference type="PDB" id="5JVG">
    <property type="method" value="X-ray"/>
    <property type="resolution" value="3.43 A"/>
    <property type="chains" value="3=1-66"/>
</dbReference>
<dbReference type="PDB" id="5JVH">
    <property type="method" value="X-ray"/>
    <property type="resolution" value="3.58 A"/>
    <property type="chains" value="3=1-66"/>
</dbReference>
<dbReference type="PDB" id="7A0R">
    <property type="method" value="X-ray"/>
    <property type="resolution" value="3.30 A"/>
    <property type="chains" value="3=2-64"/>
</dbReference>
<dbReference type="PDB" id="7A0S">
    <property type="method" value="X-ray"/>
    <property type="resolution" value="3.22 A"/>
    <property type="chains" value="3=2-64"/>
</dbReference>
<dbReference type="PDB" id="7A18">
    <property type="method" value="X-ray"/>
    <property type="resolution" value="3.40 A"/>
    <property type="chains" value="3=2-64"/>
</dbReference>
<dbReference type="PDBsum" id="1NKW"/>
<dbReference type="PDBsum" id="1NWX"/>
<dbReference type="PDBsum" id="1NWY"/>
<dbReference type="PDBsum" id="1SM1"/>
<dbReference type="PDBsum" id="1XBP"/>
<dbReference type="PDBsum" id="2ZJP"/>
<dbReference type="PDBsum" id="2ZJQ"/>
<dbReference type="PDBsum" id="2ZJR"/>
<dbReference type="PDBsum" id="3CF5"/>
<dbReference type="PDBsum" id="3DLL"/>
<dbReference type="PDBsum" id="3PIO"/>
<dbReference type="PDBsum" id="3PIP"/>
<dbReference type="PDBsum" id="4IO9"/>
<dbReference type="PDBsum" id="4IOA"/>
<dbReference type="PDBsum" id="4IOC"/>
<dbReference type="PDBsum" id="4U67"/>
<dbReference type="PDBsum" id="4V49"/>
<dbReference type="PDBsum" id="4V4A"/>
<dbReference type="PDBsum" id="4V4G"/>
<dbReference type="PDBsum" id="4V4R"/>
<dbReference type="PDBsum" id="4V4S"/>
<dbReference type="PDBsum" id="4V4T"/>
<dbReference type="PDBsum" id="4WFN"/>
<dbReference type="PDBsum" id="5DM6"/>
<dbReference type="PDBsum" id="5DM7"/>
<dbReference type="PDBsum" id="5JVG"/>
<dbReference type="PDBsum" id="5JVH"/>
<dbReference type="PDBsum" id="7A0R"/>
<dbReference type="PDBsum" id="7A0S"/>
<dbReference type="PDBsum" id="7A18"/>
<dbReference type="SMR" id="Q9RSW6"/>
<dbReference type="FunCoup" id="Q9RSW6">
    <property type="interactions" value="301"/>
</dbReference>
<dbReference type="IntAct" id="Q9RSW6">
    <property type="interactions" value="1"/>
</dbReference>
<dbReference type="STRING" id="243230.DR_2005"/>
<dbReference type="PaxDb" id="243230-DR_2005"/>
<dbReference type="EnsemblBacteria" id="AAF11554">
    <property type="protein sequence ID" value="AAF11554"/>
    <property type="gene ID" value="DR_2005"/>
</dbReference>
<dbReference type="GeneID" id="69518242"/>
<dbReference type="KEGG" id="dra:DR_2005"/>
<dbReference type="PATRIC" id="fig|243230.17.peg.2228"/>
<dbReference type="eggNOG" id="COG0291">
    <property type="taxonomic scope" value="Bacteria"/>
</dbReference>
<dbReference type="HOGENOM" id="CLU_169643_2_2_0"/>
<dbReference type="InParanoid" id="Q9RSW6"/>
<dbReference type="OrthoDB" id="47476at2"/>
<dbReference type="EvolutionaryTrace" id="Q9RSW6"/>
<dbReference type="Proteomes" id="UP000002524">
    <property type="component" value="Chromosome 1"/>
</dbReference>
<dbReference type="GO" id="GO:0022625">
    <property type="term" value="C:cytosolic large ribosomal subunit"/>
    <property type="evidence" value="ECO:0000318"/>
    <property type="project" value="GO_Central"/>
</dbReference>
<dbReference type="GO" id="GO:0019843">
    <property type="term" value="F:rRNA binding"/>
    <property type="evidence" value="ECO:0007669"/>
    <property type="project" value="UniProtKB-KW"/>
</dbReference>
<dbReference type="GO" id="GO:0003735">
    <property type="term" value="F:structural constituent of ribosome"/>
    <property type="evidence" value="ECO:0000318"/>
    <property type="project" value="GO_Central"/>
</dbReference>
<dbReference type="GO" id="GO:0006412">
    <property type="term" value="P:translation"/>
    <property type="evidence" value="ECO:0007669"/>
    <property type="project" value="UniProtKB-UniRule"/>
</dbReference>
<dbReference type="FunFam" id="4.10.410.60:FF:000001">
    <property type="entry name" value="50S ribosomal protein L35"/>
    <property type="match status" value="1"/>
</dbReference>
<dbReference type="Gene3D" id="4.10.410.60">
    <property type="match status" value="1"/>
</dbReference>
<dbReference type="HAMAP" id="MF_00514">
    <property type="entry name" value="Ribosomal_bL35"/>
    <property type="match status" value="1"/>
</dbReference>
<dbReference type="InterPro" id="IPR001706">
    <property type="entry name" value="Ribosomal_bL35"/>
</dbReference>
<dbReference type="InterPro" id="IPR021137">
    <property type="entry name" value="Ribosomal_bL35-like"/>
</dbReference>
<dbReference type="InterPro" id="IPR018265">
    <property type="entry name" value="Ribosomal_bL35_CS"/>
</dbReference>
<dbReference type="InterPro" id="IPR037229">
    <property type="entry name" value="Ribosomal_bL35_sf"/>
</dbReference>
<dbReference type="NCBIfam" id="TIGR00001">
    <property type="entry name" value="rpmI_bact"/>
    <property type="match status" value="1"/>
</dbReference>
<dbReference type="PANTHER" id="PTHR33343">
    <property type="entry name" value="54S RIBOSOMAL PROTEIN BL35M"/>
    <property type="match status" value="1"/>
</dbReference>
<dbReference type="PANTHER" id="PTHR33343:SF1">
    <property type="entry name" value="LARGE RIBOSOMAL SUBUNIT PROTEIN BL35M"/>
    <property type="match status" value="1"/>
</dbReference>
<dbReference type="Pfam" id="PF01632">
    <property type="entry name" value="Ribosomal_L35p"/>
    <property type="match status" value="1"/>
</dbReference>
<dbReference type="PRINTS" id="PR00064">
    <property type="entry name" value="RIBOSOMALL35"/>
</dbReference>
<dbReference type="SUPFAM" id="SSF143034">
    <property type="entry name" value="L35p-like"/>
    <property type="match status" value="1"/>
</dbReference>
<dbReference type="PROSITE" id="PS00936">
    <property type="entry name" value="RIBOSOMAL_L35"/>
    <property type="match status" value="1"/>
</dbReference>
<protein>
    <recommendedName>
        <fullName evidence="7">Large ribosomal subunit protein bL35</fullName>
    </recommendedName>
    <alternativeName>
        <fullName>50S ribosomal protein L35</fullName>
    </alternativeName>
</protein>
<reference key="1">
    <citation type="journal article" date="1999" name="Science">
        <title>Genome sequence of the radioresistant bacterium Deinococcus radiodurans R1.</title>
        <authorList>
            <person name="White O."/>
            <person name="Eisen J.A."/>
            <person name="Heidelberg J.F."/>
            <person name="Hickey E.K."/>
            <person name="Peterson J.D."/>
            <person name="Dodson R.J."/>
            <person name="Haft D.H."/>
            <person name="Gwinn M.L."/>
            <person name="Nelson W.C."/>
            <person name="Richardson D.L."/>
            <person name="Moffat K.S."/>
            <person name="Qin H."/>
            <person name="Jiang L."/>
            <person name="Pamphile W."/>
            <person name="Crosby M."/>
            <person name="Shen M."/>
            <person name="Vamathevan J.J."/>
            <person name="Lam P."/>
            <person name="McDonald L.A."/>
            <person name="Utterback T.R."/>
            <person name="Zalewski C."/>
            <person name="Makarova K.S."/>
            <person name="Aravind L."/>
            <person name="Daly M.J."/>
            <person name="Minton K.W."/>
            <person name="Fleischmann R.D."/>
            <person name="Ketchum K.A."/>
            <person name="Nelson K.E."/>
            <person name="Salzberg S.L."/>
            <person name="Smith H.O."/>
            <person name="Venter J.C."/>
            <person name="Fraser C.M."/>
        </authorList>
    </citation>
    <scope>NUCLEOTIDE SEQUENCE [LARGE SCALE GENOMIC DNA]</scope>
    <source>
        <strain>ATCC 13939 / DSM 20539 / JCM 16871 / CCUG 27074 / LMG 4051 / NBRC 15346 / NCIMB 9279 / VKM B-1422 / R1</strain>
    </source>
</reference>
<reference key="2">
    <citation type="journal article" date="2001" name="Cell">
        <title>High resolution structure of the large ribosomal subunit from a mesophilic eubacterium.</title>
        <authorList>
            <person name="Harms J."/>
            <person name="Schluenzen F."/>
            <person name="Zarivach R."/>
            <person name="Bashan A."/>
            <person name="Gat S."/>
            <person name="Agmon I."/>
            <person name="Bartels H."/>
            <person name="Franceschi F."/>
            <person name="Yonath A."/>
        </authorList>
    </citation>
    <scope>X-RAY CRYSTALLOGRAPHY (3.1 ANGSTROMS) OF THE 50S SUBUNIT</scope>
    <scope>PROTEIN SEQUENCE OF 1-6</scope>
    <source>
        <strain>ATCC 13939 / DSM 20539 / JCM 16871 / CCUG 27074 / LMG 4051 / NBRC 15346 / NCIMB 9279 / VKM B-1422 / R1</strain>
    </source>
</reference>
<reference key="3">
    <citation type="journal article" date="2001" name="Nature">
        <title>Structural basis for the interaction of antibiotics with the peptidyl transferase centre in eubacteria.</title>
        <authorList>
            <person name="Schluenzen F."/>
            <person name="Zarivach R."/>
            <person name="Harms J."/>
            <person name="Bashan A."/>
            <person name="Tocilj A."/>
            <person name="Albrecht R."/>
            <person name="Yonath A."/>
            <person name="Franceschi F."/>
        </authorList>
    </citation>
    <scope>X-RAY CRYSTALLOGRAPHY (3.1 ANGSTROMS) OF THE 50S SUBUNIT IN COMPLEX WITH FIVE ANTIBIOTICS</scope>
    <source>
        <strain>ATCC 13939 / DSM 20539 / JCM 16871 / CCUG 27074 / LMG 4051 / NBRC 15346 / NCIMB 9279 / VKM B-1422 / R1</strain>
    </source>
</reference>
<reference key="4">
    <citation type="journal article" date="2003" name="Mol. Cell">
        <title>Structural basis of the ribosomal machinery for peptide bond formation, translocation, and nascent chain progression.</title>
        <authorList>
            <person name="Bashan A."/>
            <person name="Agmon I."/>
            <person name="Zarivach R."/>
            <person name="Schluenzen F."/>
            <person name="Harms J."/>
            <person name="Berisio R."/>
            <person name="Bartels H."/>
            <person name="Franceschi F."/>
            <person name="Auerbach T."/>
            <person name="Hansen H.A."/>
            <person name="Kossoy E."/>
            <person name="Kessler M."/>
            <person name="Yonath A."/>
        </authorList>
    </citation>
    <scope>X-RAY CRYSTALLOGRAPHY (3.5 ANGSTROMS) OF THE 50S SUBUNIT IN COMPLEX WITH TRNA MIMICS</scope>
    <source>
        <strain>ATCC 13939 / DSM 20539 / JCM 16871 / CCUG 27074 / LMG 4051 / NBRC 15346 / NCIMB 9279 / VKM B-1422 / R1</strain>
    </source>
</reference>
<reference key="5">
    <citation type="journal article" date="2003" name="Structure">
        <title>Structural basis for the antibiotic activity of ketolides and azalides.</title>
        <authorList>
            <person name="Schluenzen F."/>
            <person name="Harms J.M."/>
            <person name="Franceschi F."/>
            <person name="Hansen H.A."/>
            <person name="Bartels H."/>
            <person name="Zarivach R."/>
            <person name="Yonath A."/>
        </authorList>
    </citation>
    <scope>X-RAY CRYSTALLOGRAPHY (3.3 ANGSTROMS) OF THE 50S SUBUNIT IN COMPLEX WITH MODIFIED MACROLIDE ANTIBIOTICS</scope>
    <source>
        <strain>ATCC 13939 / DSM 20539 / JCM 16871 / CCUG 27074 / LMG 4051 / NBRC 15346 / NCIMB 9279 / VKM B-1422 / R1</strain>
    </source>
</reference>
<reference key="6">
    <citation type="journal article" date="2003" name="Nat. Struct. Biol.">
        <title>Structural insight into the role of the ribosomal tunnel in cellular regulation.</title>
        <authorList>
            <person name="Berisio R."/>
            <person name="Schluenzen F."/>
            <person name="Harms J."/>
            <person name="Bashan A."/>
            <person name="Auerbach T."/>
            <person name="Baram D."/>
            <person name="Yonath A."/>
        </authorList>
    </citation>
    <scope>X-RAY CRYSTALLOGRAPHY (3.4 ANGSTROMS) OF THE 50S SUBUNIT IN COMPLEX WITH TROLEANDOMYCIN</scope>
    <source>
        <strain>ATCC 13939 / DSM 20539 / JCM 16871 / CCUG 27074 / LMG 4051 / NBRC 15346 / NCIMB 9279 / VKM B-1422 / R1</strain>
    </source>
</reference>
<reference key="7">
    <citation type="journal article" date="2004" name="BMC Biol.">
        <title>Alterations at the peptidyl transferase centre of the ribosome induced by the synergistic action of the streptogramins dalfopristin and quinupristin.</title>
        <authorList>
            <person name="Harms J.M."/>
            <person name="Schluenzen F."/>
            <person name="Fucini P."/>
            <person name="Bartels H."/>
            <person name="Yonath A."/>
        </authorList>
    </citation>
    <scope>X-RAY CRYSTALLOGRAPHY (3.4 ANGSTROMS) OF THE 50S SUBUNIT IN COMPLEX WITH THE STREPTOGRAMINS QUINUPRISTIN AND DALFOPRISTIN</scope>
    <source>
        <strain>ATCC 13939 / DSM 20539 / JCM 16871 / CCUG 27074 / LMG 4051 / NBRC 15346 / NCIMB 9279 / VKM B-1422 / R1</strain>
    </source>
</reference>
<reference key="8">
    <citation type="journal article" date="2004" name="Mol. Microbiol.">
        <title>Inhibition of peptide bond formation by pleuromutilins: the structure of the 50S ribosomal subunit from Deinococcus radiodurans in complex with tiamulin.</title>
        <authorList>
            <person name="Schluenzen F."/>
            <person name="Pyetan E."/>
            <person name="Fucini P."/>
            <person name="Yonath A."/>
            <person name="Harms J.M."/>
        </authorList>
    </citation>
    <scope>X-RAY CRYSTALLOGRAPHY (3.5 ANGSTROMS) OF THE 50S SUBUNIT IN COMPLEX WITH TIAMULIN</scope>
    <source>
        <strain>ATCC 13939 / DSM 20539 / JCM 16871 / CCUG 27074 / LMG 4051 / NBRC 15346 / NCIMB 9279 / VKM B-1422 / R1</strain>
    </source>
</reference>
<proteinExistence type="evidence at protein level"/>
<gene>
    <name type="primary">rpmI</name>
    <name type="ordered locus">DR_2005</name>
</gene>
<comment type="function">
    <text>Binds the 23S rRNA.</text>
</comment>
<comment type="subunit">
    <text evidence="1 2 3 4 5 6">Part of the 50S ribosomal subunit. Contacts proteins L15 and L33.</text>
</comment>
<comment type="similarity">
    <text evidence="7">Belongs to the bacterial ribosomal protein bL35 family.</text>
</comment>
<sequence length="66" mass="7426">MPKMKTHKMAKRRIKITGTGKVMAFKSGKRHQNTGKSGDEIRGKGKGFVLAKAEWARMKLMLPRGK</sequence>
<feature type="initiator methionine" description="Removed">
    <location>
        <position position="1"/>
    </location>
</feature>
<feature type="chain" id="PRO_0000177357" description="Large ribosomal subunit protein bL35">
    <location>
        <begin position="2"/>
        <end position="66"/>
    </location>
</feature>
<feature type="helix" evidence="9">
    <location>
        <begin position="8"/>
        <end position="10"/>
    </location>
</feature>
<feature type="turn" evidence="9">
    <location>
        <begin position="11"/>
        <end position="13"/>
    </location>
</feature>
<feature type="strand" evidence="9">
    <location>
        <begin position="18"/>
        <end position="20"/>
    </location>
</feature>
<feature type="strand" evidence="9">
    <location>
        <begin position="22"/>
        <end position="24"/>
    </location>
</feature>
<feature type="strand" evidence="10">
    <location>
        <begin position="30"/>
        <end position="32"/>
    </location>
</feature>
<feature type="helix" evidence="9">
    <location>
        <begin position="38"/>
        <end position="44"/>
    </location>
</feature>
<feature type="strand" evidence="8">
    <location>
        <begin position="50"/>
        <end position="53"/>
    </location>
</feature>
<feature type="helix" evidence="9">
    <location>
        <begin position="55"/>
        <end position="61"/>
    </location>
</feature>
<keyword id="KW-0002">3D-structure</keyword>
<keyword id="KW-0903">Direct protein sequencing</keyword>
<keyword id="KW-1185">Reference proteome</keyword>
<keyword id="KW-0687">Ribonucleoprotein</keyword>
<keyword id="KW-0689">Ribosomal protein</keyword>
<keyword id="KW-0694">RNA-binding</keyword>
<keyword id="KW-0699">rRNA-binding</keyword>
<evidence type="ECO:0000269" key="1">
    <source>
    </source>
</evidence>
<evidence type="ECO:0000269" key="2">
    <source>
    </source>
</evidence>
<evidence type="ECO:0000269" key="3">
    <source>
    </source>
</evidence>
<evidence type="ECO:0000269" key="4">
    <source>
    </source>
</evidence>
<evidence type="ECO:0000269" key="5">
    <source>
    </source>
</evidence>
<evidence type="ECO:0000269" key="6">
    <source>
    </source>
</evidence>
<evidence type="ECO:0000305" key="7"/>
<evidence type="ECO:0007829" key="8">
    <source>
        <dbReference type="PDB" id="3PIO"/>
    </source>
</evidence>
<evidence type="ECO:0007829" key="9">
    <source>
        <dbReference type="PDB" id="5DM6"/>
    </source>
</evidence>
<evidence type="ECO:0007829" key="10">
    <source>
        <dbReference type="PDB" id="5DM7"/>
    </source>
</evidence>
<name>RL35_DEIRA</name>
<organism>
    <name type="scientific">Deinococcus radiodurans (strain ATCC 13939 / DSM 20539 / JCM 16871 / CCUG 27074 / LMG 4051 / NBRC 15346 / NCIMB 9279 / VKM B-1422 / R1)</name>
    <dbReference type="NCBI Taxonomy" id="243230"/>
    <lineage>
        <taxon>Bacteria</taxon>
        <taxon>Thermotogati</taxon>
        <taxon>Deinococcota</taxon>
        <taxon>Deinococci</taxon>
        <taxon>Deinococcales</taxon>
        <taxon>Deinococcaceae</taxon>
        <taxon>Deinococcus</taxon>
    </lineage>
</organism>
<accession>Q9RSW6</accession>